<organism>
    <name type="scientific">Saccharomyces cerevisiae (strain ATCC 204508 / S288c)</name>
    <name type="common">Baker's yeast</name>
    <dbReference type="NCBI Taxonomy" id="559292"/>
    <lineage>
        <taxon>Eukaryota</taxon>
        <taxon>Fungi</taxon>
        <taxon>Dikarya</taxon>
        <taxon>Ascomycota</taxon>
        <taxon>Saccharomycotina</taxon>
        <taxon>Saccharomycetes</taxon>
        <taxon>Saccharomycetales</taxon>
        <taxon>Saccharomycetaceae</taxon>
        <taxon>Saccharomyces</taxon>
    </lineage>
</organism>
<proteinExistence type="predicted"/>
<name>JIP3_YEAST</name>
<reference key="1">
    <citation type="journal article" date="1997" name="Nature">
        <title>The nucleotide sequence of Saccharomyces cerevisiae chromosome XII.</title>
        <authorList>
            <person name="Johnston M."/>
            <person name="Hillier L.W."/>
            <person name="Riles L."/>
            <person name="Albermann K."/>
            <person name="Andre B."/>
            <person name="Ansorge W."/>
            <person name="Benes V."/>
            <person name="Brueckner M."/>
            <person name="Delius H."/>
            <person name="Dubois E."/>
            <person name="Duesterhoeft A."/>
            <person name="Entian K.-D."/>
            <person name="Floeth M."/>
            <person name="Goffeau A."/>
            <person name="Hebling U."/>
            <person name="Heumann K."/>
            <person name="Heuss-Neitzel D."/>
            <person name="Hilbert H."/>
            <person name="Hilger F."/>
            <person name="Kleine K."/>
            <person name="Koetter P."/>
            <person name="Louis E.J."/>
            <person name="Messenguy F."/>
            <person name="Mewes H.-W."/>
            <person name="Miosga T."/>
            <person name="Moestl D."/>
            <person name="Mueller-Auer S."/>
            <person name="Nentwich U."/>
            <person name="Obermaier B."/>
            <person name="Piravandi E."/>
            <person name="Pohl T.M."/>
            <person name="Portetelle D."/>
            <person name="Purnelle B."/>
            <person name="Rechmann S."/>
            <person name="Rieger M."/>
            <person name="Rinke M."/>
            <person name="Rose M."/>
            <person name="Scharfe M."/>
            <person name="Scherens B."/>
            <person name="Scholler P."/>
            <person name="Schwager C."/>
            <person name="Schwarz S."/>
            <person name="Underwood A.P."/>
            <person name="Urrestarazu L.A."/>
            <person name="Vandenbol M."/>
            <person name="Verhasselt P."/>
            <person name="Vierendeels F."/>
            <person name="Voet M."/>
            <person name="Volckaert G."/>
            <person name="Voss H."/>
            <person name="Wambutt R."/>
            <person name="Wedler E."/>
            <person name="Wedler H."/>
            <person name="Zimmermann F.K."/>
            <person name="Zollner A."/>
            <person name="Hani J."/>
            <person name="Hoheisel J.D."/>
        </authorList>
    </citation>
    <scope>NUCLEOTIDE SEQUENCE [LARGE SCALE GENOMIC DNA]</scope>
    <source>
        <strain>ATCC 204508 / S288c</strain>
    </source>
</reference>
<reference key="2">
    <citation type="journal article" date="2014" name="G3 (Bethesda)">
        <title>The reference genome sequence of Saccharomyces cerevisiae: Then and now.</title>
        <authorList>
            <person name="Engel S.R."/>
            <person name="Dietrich F.S."/>
            <person name="Fisk D.G."/>
            <person name="Binkley G."/>
            <person name="Balakrishnan R."/>
            <person name="Costanzo M.C."/>
            <person name="Dwight S.S."/>
            <person name="Hitz B.C."/>
            <person name="Karra K."/>
            <person name="Nash R.S."/>
            <person name="Weng S."/>
            <person name="Wong E.D."/>
            <person name="Lloyd P."/>
            <person name="Skrzypek M.S."/>
            <person name="Miyasato S.R."/>
            <person name="Simison M."/>
            <person name="Cherry J.M."/>
        </authorList>
    </citation>
    <scope>GENOME REANNOTATION</scope>
    <source>
        <strain>ATCC 204508 / S288c</strain>
    </source>
</reference>
<protein>
    <recommendedName>
        <fullName>Uncharacterized protein JIP3</fullName>
    </recommendedName>
</protein>
<sequence>MEKDEEDEESEEAEEELLVLESDEKLNDVNDMEAMLVDELVCDTRDLLDVDEVREDESALEEETILDDKMELEELTLLTEERAVDTAEEFEDDDCTKNCARIVDMHDSIKSNKRKLFLVVKDNIL</sequence>
<dbReference type="EMBL" id="U20618">
    <property type="protein sequence ID" value="AAB64532.1"/>
    <property type="molecule type" value="Genomic_DNA"/>
</dbReference>
<dbReference type="EMBL" id="BK006945">
    <property type="protein sequence ID" value="DAA80321.1"/>
    <property type="molecule type" value="Genomic_DNA"/>
</dbReference>
<dbReference type="PIR" id="S69311">
    <property type="entry name" value="S69311"/>
</dbReference>
<dbReference type="RefSeq" id="NP_001335801.1">
    <property type="nucleotide sequence ID" value="NM_001348861.1"/>
</dbReference>
<dbReference type="SMR" id="O13555"/>
<dbReference type="DIP" id="DIP-5312N"/>
<dbReference type="FunCoup" id="O13555">
    <property type="interactions" value="62"/>
</dbReference>
<dbReference type="IntAct" id="O13555">
    <property type="interactions" value="2"/>
</dbReference>
<dbReference type="STRING" id="4932.YLR331C"/>
<dbReference type="PaxDb" id="4932-YLR331C"/>
<dbReference type="EnsemblFungi" id="YLR331C_mRNA">
    <property type="protein sequence ID" value="YLR331C"/>
    <property type="gene ID" value="YLR331C"/>
</dbReference>
<dbReference type="GeneID" id="851043"/>
<dbReference type="AGR" id="SGD:S000004323"/>
<dbReference type="SGD" id="S000004323">
    <property type="gene designation" value="JIP3"/>
</dbReference>
<dbReference type="HOGENOM" id="CLU_162875_0_0_1"/>
<dbReference type="InParanoid" id="O13555"/>
<dbReference type="OrthoDB" id="10456060at2759"/>
<dbReference type="PRO" id="PR:O13555"/>
<dbReference type="Proteomes" id="UP000002311">
    <property type="component" value="Chromosome XII"/>
</dbReference>
<dbReference type="RNAct" id="O13555">
    <property type="molecule type" value="protein"/>
</dbReference>
<gene>
    <name type="primary">JIP3</name>
    <name type="ordered locus">YLR331C</name>
</gene>
<feature type="chain" id="PRO_0000299775" description="Uncharacterized protein JIP3">
    <location>
        <begin position="1"/>
        <end position="125"/>
    </location>
</feature>
<accession>O13555</accession>
<accession>A0A1S0T0A6</accession>
<keyword id="KW-1185">Reference proteome</keyword>